<comment type="function">
    <text evidence="2 5 7">Glycosyltransferase that initiates the elongation of O-linked fucose residues attached to EGF-like repeats in the extracellular domain of Notch molecules. Involved in the correct formation of boundaries in the somites and hindbrain (By similarity). Required for Delta-Notch-mediated induction of hypochord cells at the lateral borders of the midline precursor domain (PubMed:11429294, PubMed:14518000).</text>
</comment>
<comment type="catalytic activity">
    <reaction evidence="2">
        <text>3-O-(alpha-L-fucosyl)-L-threonyl-[EGF-like domain protein] + UDP-N-acetyl-alpha-D-glucosamine = 3-O-(N-acetyl-beta-D-glucosaminyl-(1-&gt;3)-alpha-L-fucosyl)-L-threonyl-[EGF-like domain protein] + UDP + H(+)</text>
        <dbReference type="Rhea" id="RHEA:70531"/>
        <dbReference type="Rhea" id="RHEA-COMP:17922"/>
        <dbReference type="Rhea" id="RHEA-COMP:17923"/>
        <dbReference type="ChEBI" id="CHEBI:15378"/>
        <dbReference type="ChEBI" id="CHEBI:57705"/>
        <dbReference type="ChEBI" id="CHEBI:58223"/>
        <dbReference type="ChEBI" id="CHEBI:189631"/>
        <dbReference type="ChEBI" id="CHEBI:189634"/>
        <dbReference type="EC" id="2.4.1.222"/>
    </reaction>
</comment>
<comment type="catalytic activity">
    <reaction evidence="2">
        <text>3-O-(alpha-L-fucosyl)-L-seryl-[EGF-like domain protein] + UDP-N-acetyl-alpha-D-glucosamine = 3-O-(N-acetyl-beta-D-glucosaminyl-(1-&gt;3)-alpha-L-fucosyl)-L-seryl-[EGF-like domain protein] + UDP + H(+)</text>
        <dbReference type="Rhea" id="RHEA:70511"/>
        <dbReference type="Rhea" id="RHEA-COMP:17919"/>
        <dbReference type="Rhea" id="RHEA-COMP:17920"/>
        <dbReference type="ChEBI" id="CHEBI:15378"/>
        <dbReference type="ChEBI" id="CHEBI:57705"/>
        <dbReference type="ChEBI" id="CHEBI:58223"/>
        <dbReference type="ChEBI" id="CHEBI:189632"/>
        <dbReference type="ChEBI" id="CHEBI:189633"/>
        <dbReference type="EC" id="2.4.1.222"/>
    </reaction>
</comment>
<comment type="cofactor">
    <cofactor evidence="2">
        <name>Mn(2+)</name>
        <dbReference type="ChEBI" id="CHEBI:29035"/>
    </cofactor>
    <cofactor evidence="2">
        <name>Co(2+)</name>
        <dbReference type="ChEBI" id="CHEBI:48828"/>
    </cofactor>
    <text evidence="2">Manganese is the most effective. Can also use cobalt with lower efficiency. Has some activity with magnesium and calcium, but not zinc.</text>
</comment>
<comment type="subcellular location">
    <subcellularLocation>
        <location evidence="1">Golgi apparatus membrane</location>
        <topology evidence="1">Single-pass type II membrane protein</topology>
    </subcellularLocation>
</comment>
<comment type="tissue specificity">
    <text evidence="5 8">In the embryo, expressed along the A-P axis of the neural tube, within the lateral plate mesoderm, in the presomitic mesoderm and the somites, in specific rhombomeres of the hindbrain (even-numbered rhombomeres) and in the otic vesicles.</text>
</comment>
<comment type="developmental stage">
    <text evidence="5 6 7 9">Expressed both maternally and throughout the zygotic stages, with highest expression at the bud stage. No evidence for a cyclic pattern of expression in the presomitic mesoderm during somitogenesis. Expressed weakly at the epiboly stage (4.5 hours) throughout the blastoderm. Expression clears from marginal region and localizes to the epiblast cells of the animal pole. As gastrulation proceeds, expressed in hypoblast cells that migrate towards the animal pole, in the prechordal plate and in forerunner cells. At 90% epiboly, expressed in the neural plate. At the three somite stage (11 hours), expressed in a small cluster of cells within the tailbud region and in future spinal cord. From the 8-14 somite stages, expressed in alternating pre-rhombomeres of the hindbrain, and more broadly in mid- and forebrain. Also expressed weakly in the anterior margins of the formed somites and in the anterior presomitic mesoderm. At the end of somitogenesis (22 hours), expressed strongly in the telencephalon and anterior midbrain, weakly in other parts of the midbrain and variably in the hindbrain.</text>
</comment>
<comment type="PTM">
    <text evidence="10">A soluble form may be derived from the membrane form by proteolytic processing.</text>
</comment>
<comment type="similarity">
    <text evidence="10">Belongs to the glycosyltransferase 31 family.</text>
</comment>
<evidence type="ECO:0000250" key="1"/>
<evidence type="ECO:0000250" key="2">
    <source>
        <dbReference type="UniProtKB" id="O09010"/>
    </source>
</evidence>
<evidence type="ECO:0000255" key="3"/>
<evidence type="ECO:0000256" key="4">
    <source>
        <dbReference type="SAM" id="MobiDB-lite"/>
    </source>
</evidence>
<evidence type="ECO:0000269" key="5">
    <source>
    </source>
</evidence>
<evidence type="ECO:0000269" key="6">
    <source>
    </source>
</evidence>
<evidence type="ECO:0000269" key="7">
    <source>
    </source>
</evidence>
<evidence type="ECO:0000269" key="8">
    <source>
    </source>
</evidence>
<evidence type="ECO:0000269" key="9">
    <source>
    </source>
</evidence>
<evidence type="ECO:0000305" key="10"/>
<reference key="1">
    <citation type="journal article" date="2001" name="Dev. Genes Evol.">
        <title>Homologues of c-hairy1 (her9) and lunatic fringe in zebrafish are expressed in the developing central nervous system, but not in the presomitic mesoderm.</title>
        <authorList>
            <person name="Leve C."/>
            <person name="Gajewski M."/>
            <person name="Rohr K.B."/>
            <person name="Tautz D."/>
        </authorList>
    </citation>
    <scope>NUCLEOTIDE SEQUENCE [MRNA]</scope>
    <scope>DEVELOPMENTAL STAGE</scope>
</reference>
<reference key="2">
    <citation type="journal article" date="2001" name="Mech. Dev.">
        <title>Zebrafish lunatic fringe demarcates segmental boundaries.</title>
        <authorList>
            <person name="Prince V.E."/>
            <person name="Holley S.A."/>
            <person name="Bally-Cuif L."/>
            <person name="Prabhakaran B."/>
            <person name="Oates A.C."/>
            <person name="Ho R.K."/>
            <person name="Vogt T.F."/>
        </authorList>
    </citation>
    <scope>NUCLEOTIDE SEQUENCE [MRNA]</scope>
    <scope>FUNCTION</scope>
    <scope>TISSUE SPECIFICITY</scope>
    <scope>DEVELOPMENTAL STAGE</scope>
    <source>
        <tissue>Embryo</tissue>
    </source>
</reference>
<reference key="3">
    <citation type="journal article" date="2003" name="Dev. Dyn.">
        <title>Lunatic fringe regulates Delta-Notch induction of hypochord in zebrafish.</title>
        <authorList>
            <person name="Appel B."/>
            <person name="Marasco P."/>
            <person name="McClung L.E."/>
            <person name="Latimer A.J."/>
        </authorList>
    </citation>
    <scope>NUCLEOTIDE SEQUENCE [MRNA]</scope>
    <scope>FUNCTION</scope>
    <scope>DEVELOPMENTAL STAGE</scope>
    <source>
        <tissue>Embryo</tissue>
    </source>
</reference>
<reference key="4">
    <citation type="journal article" date="2004" name="Dev. Dyn.">
        <title>Sequence and embryonic expression of three zebrafish fringe genes: lunatic fringe, radical fringe, and manic fringe.</title>
        <authorList>
            <person name="Qiu X."/>
            <person name="Xu H."/>
            <person name="Haddon C."/>
            <person name="Lewis J."/>
            <person name="Jiang Y.-J."/>
        </authorList>
    </citation>
    <scope>NUCLEOTIDE SEQUENCE [MRNA]</scope>
    <scope>TISSUE SPECIFICITY</scope>
    <source>
        <tissue>Embryo</tissue>
    </source>
</reference>
<reference key="5">
    <citation type="submission" date="2003-01" db="EMBL/GenBank/DDBJ databases">
        <authorList>
            <consortium name="NIH - Zebrafish Gene Collection (ZGC) project"/>
        </authorList>
    </citation>
    <scope>NUCLEOTIDE SEQUENCE [LARGE SCALE MRNA]</scope>
    <source>
        <strain>AB</strain>
    </source>
</reference>
<reference key="6">
    <citation type="journal article" date="2006" name="Mar. Biotechnol.">
        <title>Upstream regulatory region of zebrafish lunatic fringe: isolation and promoter analysis.</title>
        <authorList>
            <person name="Liu J."/>
            <person name="Sun Y.-H."/>
            <person name="Wang N."/>
            <person name="Wang Y.-P."/>
            <person name="Zhu Z.-Y."/>
        </authorList>
    </citation>
    <scope>DEVELOPMENTAL STAGE</scope>
</reference>
<accession>Q8JHF2</accession>
<accession>Q9DEV1</accession>
<protein>
    <recommendedName>
        <fullName evidence="10">Beta-1,3-N-acetylglucosaminyltransferase lunatic fringe</fullName>
        <ecNumber evidence="2">2.4.1.222</ecNumber>
    </recommendedName>
    <alternativeName>
        <fullName>O-fucosylpeptide 3-beta-N-acetylglucosaminyltransferase</fullName>
    </alternativeName>
</protein>
<gene>
    <name type="primary">lfng</name>
</gene>
<feature type="chain" id="PRO_0000219180" description="Beta-1,3-N-acetylglucosaminyltransferase lunatic fringe">
    <location>
        <begin position="1"/>
        <end position="374"/>
    </location>
</feature>
<feature type="topological domain" description="Cytoplasmic" evidence="3">
    <location>
        <begin position="1"/>
        <end position="8"/>
    </location>
</feature>
<feature type="transmembrane region" description="Helical; Signal-anchor for type II membrane protein" evidence="3">
    <location>
        <begin position="9"/>
        <end position="29"/>
    </location>
</feature>
<feature type="topological domain" description="Lumenal" evidence="3">
    <location>
        <begin position="30"/>
        <end position="374"/>
    </location>
</feature>
<feature type="region of interest" description="Disordered" evidence="4">
    <location>
        <begin position="80"/>
        <end position="100"/>
    </location>
</feature>
<feature type="active site" evidence="1">
    <location>
        <position position="285"/>
    </location>
</feature>
<feature type="binding site" evidence="1">
    <location>
        <position position="123"/>
    </location>
    <ligand>
        <name>substrate</name>
    </ligand>
</feature>
<feature type="binding site" evidence="1">
    <location>
        <position position="196"/>
    </location>
    <ligand>
        <name>substrate</name>
    </ligand>
</feature>
<feature type="binding site" evidence="1">
    <location>
        <position position="197"/>
    </location>
    <ligand>
        <name>Mn(2+)</name>
        <dbReference type="ChEBI" id="CHEBI:29035"/>
    </ligand>
</feature>
<feature type="binding site" evidence="1">
    <location>
        <position position="309"/>
    </location>
    <ligand>
        <name>Mn(2+)</name>
        <dbReference type="ChEBI" id="CHEBI:29035"/>
    </ligand>
</feature>
<feature type="site" description="Cleavage; by furin-like protease" evidence="3">
    <location>
        <begin position="83"/>
        <end position="84"/>
    </location>
</feature>
<feature type="glycosylation site" description="N-linked (GlcNAc...) asparagine" evidence="3">
    <location>
        <position position="40"/>
    </location>
</feature>
<feature type="glycosylation site" description="N-linked (GlcNAc...) asparagine" evidence="3">
    <location>
        <position position="162"/>
    </location>
</feature>
<feature type="disulfide bond" evidence="1">
    <location>
        <begin position="163"/>
        <end position="174"/>
    </location>
</feature>
<feature type="disulfide bond" evidence="1">
    <location>
        <begin position="192"/>
        <end position="255"/>
    </location>
</feature>
<feature type="disulfide bond" evidence="1">
    <location>
        <begin position="359"/>
        <end position="368"/>
    </location>
</feature>
<feature type="sequence conflict" description="In Ref. 2." evidence="10" ref="2">
    <original>A</original>
    <variation>T</variation>
    <location>
        <position position="16"/>
    </location>
</feature>
<feature type="sequence conflict" description="In Ref. 2." evidence="10" ref="2">
    <original>L</original>
    <variation>LL</variation>
    <location>
        <position position="46"/>
    </location>
</feature>
<feature type="sequence conflict" description="In Ref. 2." evidence="10" ref="2">
    <original>EQNA</original>
    <variation>DQENT</variation>
    <location>
        <begin position="64"/>
        <end position="67"/>
    </location>
</feature>
<feature type="sequence conflict" description="In Ref. 2." evidence="10" ref="2">
    <original>I</original>
    <variation>M</variation>
    <location>
        <position position="109"/>
    </location>
</feature>
<feature type="sequence conflict" description="In Ref. 4; AAM44059." evidence="10" ref="4">
    <original>R</original>
    <variation>Q</variation>
    <location>
        <position position="137"/>
    </location>
</feature>
<feature type="sequence conflict" description="In Ref. 2." evidence="10" ref="2">
    <original>A</original>
    <variation>V</variation>
    <location>
        <position position="344"/>
    </location>
</feature>
<keyword id="KW-0217">Developmental protein</keyword>
<keyword id="KW-0221">Differentiation</keyword>
<keyword id="KW-1015">Disulfide bond</keyword>
<keyword id="KW-0325">Glycoprotein</keyword>
<keyword id="KW-0328">Glycosyltransferase</keyword>
<keyword id="KW-0333">Golgi apparatus</keyword>
<keyword id="KW-0464">Manganese</keyword>
<keyword id="KW-0472">Membrane</keyword>
<keyword id="KW-0479">Metal-binding</keyword>
<keyword id="KW-0524">Neurogenesis</keyword>
<keyword id="KW-0914">Notch signaling pathway</keyword>
<keyword id="KW-1185">Reference proteome</keyword>
<keyword id="KW-0735">Signal-anchor</keyword>
<keyword id="KW-0808">Transferase</keyword>
<keyword id="KW-0812">Transmembrane</keyword>
<keyword id="KW-1133">Transmembrane helix</keyword>
<organism>
    <name type="scientific">Danio rerio</name>
    <name type="common">Zebrafish</name>
    <name type="synonym">Brachydanio rerio</name>
    <dbReference type="NCBI Taxonomy" id="7955"/>
    <lineage>
        <taxon>Eukaryota</taxon>
        <taxon>Metazoa</taxon>
        <taxon>Chordata</taxon>
        <taxon>Craniata</taxon>
        <taxon>Vertebrata</taxon>
        <taxon>Euteleostomi</taxon>
        <taxon>Actinopterygii</taxon>
        <taxon>Neopterygii</taxon>
        <taxon>Teleostei</taxon>
        <taxon>Ostariophysi</taxon>
        <taxon>Cypriniformes</taxon>
        <taxon>Danionidae</taxon>
        <taxon>Danioninae</taxon>
        <taxon>Danio</taxon>
    </lineage>
</organism>
<sequence length="374" mass="41882">MLKTYRGKVVVSLAGATVTCLGFLLFLSQHQRIQADGMQNESEVGLRSLQSLGDSETDDGAQPEQNAKKGFSAYFSKLTRSRREADKPSEAPGAATDAPPAEDISADDIFIAVKTTKKFHRSRLDLLLDTWISRNMRQTYIFTDGEDEELKKKIGSHAINTNCSAAHSRQALSCKMAVEYDKFIESGKKWFCHVDDDNYVNTKTLVKLLSNYPHTQDMYIGKPSLDRPIEATERLGDNKMRPVNFWFATGGAGFCISRGLALKMSPWASGGHFMNTAEKIRLPDDCTIGYIIESVLGVSLTRSSLFHSHLENLQQVSKSEVHKQITLSYGMFENKRNIINMKGAFSVEEDPSRFKSVHCLLYPDTPWCPPQVAY</sequence>
<proteinExistence type="evidence at transcript level"/>
<name>LFNG_DANRE</name>
<dbReference type="EC" id="2.4.1.222" evidence="2"/>
<dbReference type="EMBL" id="AY007434">
    <property type="protein sequence ID" value="AAG12160.1"/>
    <property type="molecule type" value="mRNA"/>
</dbReference>
<dbReference type="EMBL" id="AF510992">
    <property type="protein sequence ID" value="AAM44059.1"/>
    <property type="molecule type" value="mRNA"/>
</dbReference>
<dbReference type="EMBL" id="BC044339">
    <property type="protein sequence ID" value="AAH44339.1"/>
    <property type="molecule type" value="mRNA"/>
</dbReference>
<dbReference type="RefSeq" id="NP_571046.1">
    <property type="nucleotide sequence ID" value="NM_130971.2"/>
</dbReference>
<dbReference type="SMR" id="Q8JHF2"/>
<dbReference type="FunCoup" id="Q8JHF2">
    <property type="interactions" value="814"/>
</dbReference>
<dbReference type="STRING" id="7955.ENSDARP00000031031"/>
<dbReference type="CAZy" id="GT31">
    <property type="family name" value="Glycosyltransferase Family 31"/>
</dbReference>
<dbReference type="GlyCosmos" id="Q8JHF2">
    <property type="glycosylation" value="2 sites, No reported glycans"/>
</dbReference>
<dbReference type="PaxDb" id="7955-ENSDARP00000031031"/>
<dbReference type="Ensembl" id="ENSDART00000028673">
    <property type="protein sequence ID" value="ENSDARP00000031031"/>
    <property type="gene ID" value="ENSDARG00000037879"/>
</dbReference>
<dbReference type="GeneID" id="30158"/>
<dbReference type="KEGG" id="dre:30158"/>
<dbReference type="AGR" id="ZFIN:ZDB-GENE-980605-16"/>
<dbReference type="CTD" id="3955"/>
<dbReference type="ZFIN" id="ZDB-GENE-980605-16">
    <property type="gene designation" value="lfng"/>
</dbReference>
<dbReference type="eggNOG" id="ENOG502QV30">
    <property type="taxonomic scope" value="Eukaryota"/>
</dbReference>
<dbReference type="HOGENOM" id="CLU_056611_0_1_1"/>
<dbReference type="InParanoid" id="Q8JHF2"/>
<dbReference type="OMA" id="CPHTAVF"/>
<dbReference type="OrthoDB" id="8959630at2759"/>
<dbReference type="PhylomeDB" id="Q8JHF2"/>
<dbReference type="TreeFam" id="TF324207"/>
<dbReference type="PRO" id="PR:Q8JHF2"/>
<dbReference type="Proteomes" id="UP000000437">
    <property type="component" value="Chromosome 3"/>
</dbReference>
<dbReference type="Bgee" id="ENSDARG00000037879">
    <property type="expression patterns" value="Expressed in somite and 55 other cell types or tissues"/>
</dbReference>
<dbReference type="ExpressionAtlas" id="Q8JHF2">
    <property type="expression patterns" value="baseline"/>
</dbReference>
<dbReference type="GO" id="GO:0000139">
    <property type="term" value="C:Golgi membrane"/>
    <property type="evidence" value="ECO:0007669"/>
    <property type="project" value="UniProtKB-SubCell"/>
</dbReference>
<dbReference type="GO" id="GO:0046872">
    <property type="term" value="F:metal ion binding"/>
    <property type="evidence" value="ECO:0007669"/>
    <property type="project" value="UniProtKB-KW"/>
</dbReference>
<dbReference type="GO" id="GO:0033829">
    <property type="term" value="F:O-fucosylpeptide 3-beta-N-acetylglucosaminyltransferase activity"/>
    <property type="evidence" value="ECO:0000318"/>
    <property type="project" value="GO_Central"/>
</dbReference>
<dbReference type="GO" id="GO:0030154">
    <property type="term" value="P:cell differentiation"/>
    <property type="evidence" value="ECO:0007669"/>
    <property type="project" value="UniProtKB-KW"/>
</dbReference>
<dbReference type="GO" id="GO:0031101">
    <property type="term" value="P:fin regeneration"/>
    <property type="evidence" value="ECO:0000315"/>
    <property type="project" value="ZFIN"/>
</dbReference>
<dbReference type="GO" id="GO:0055016">
    <property type="term" value="P:hypochord development"/>
    <property type="evidence" value="ECO:0000315"/>
    <property type="project" value="ZFIN"/>
</dbReference>
<dbReference type="GO" id="GO:0045665">
    <property type="term" value="P:negative regulation of neuron differentiation"/>
    <property type="evidence" value="ECO:0000315"/>
    <property type="project" value="ZFIN"/>
</dbReference>
<dbReference type="GO" id="GO:0007399">
    <property type="term" value="P:nervous system development"/>
    <property type="evidence" value="ECO:0007669"/>
    <property type="project" value="UniProtKB-KW"/>
</dbReference>
<dbReference type="GO" id="GO:0007219">
    <property type="term" value="P:Notch signaling pathway"/>
    <property type="evidence" value="ECO:0007669"/>
    <property type="project" value="UniProtKB-KW"/>
</dbReference>
<dbReference type="GO" id="GO:0007389">
    <property type="term" value="P:pattern specification process"/>
    <property type="evidence" value="ECO:0007669"/>
    <property type="project" value="InterPro"/>
</dbReference>
<dbReference type="GO" id="GO:0008593">
    <property type="term" value="P:regulation of Notch signaling pathway"/>
    <property type="evidence" value="ECO:0000250"/>
    <property type="project" value="UniProtKB"/>
</dbReference>
<dbReference type="FunFam" id="3.90.550.50:FF:000003">
    <property type="entry name" value="Beta-1,3-N-acetylglucosaminyltransferase"/>
    <property type="match status" value="1"/>
</dbReference>
<dbReference type="Gene3D" id="3.90.550.50">
    <property type="match status" value="1"/>
</dbReference>
<dbReference type="InterPro" id="IPR017374">
    <property type="entry name" value="Fringe"/>
</dbReference>
<dbReference type="InterPro" id="IPR003378">
    <property type="entry name" value="Fringe-like_glycosylTrfase"/>
</dbReference>
<dbReference type="PANTHER" id="PTHR10811">
    <property type="entry name" value="FRINGE-RELATED"/>
    <property type="match status" value="1"/>
</dbReference>
<dbReference type="Pfam" id="PF02434">
    <property type="entry name" value="Fringe"/>
    <property type="match status" value="1"/>
</dbReference>
<dbReference type="PIRSF" id="PIRSF038073">
    <property type="entry name" value="B-acetylgalactosaminyltfrase"/>
    <property type="match status" value="1"/>
</dbReference>